<evidence type="ECO:0000255" key="1">
    <source>
        <dbReference type="HAMAP-Rule" id="MF_00270"/>
    </source>
</evidence>
<evidence type="ECO:0000305" key="2"/>
<name>RS18_LEPCP</name>
<sequence length="94" mass="11045">MPPPRGKFSKDRKTKRNQQSLLFKRKRFCRFTVTGVKEIDYKDLDVLRDFVGENGKITPARLTGTRAFFQRQLTTAIKRARFLALLPYSDQHKV</sequence>
<dbReference type="EMBL" id="CP001013">
    <property type="protein sequence ID" value="ACB35093.1"/>
    <property type="molecule type" value="Genomic_DNA"/>
</dbReference>
<dbReference type="RefSeq" id="WP_012347847.1">
    <property type="nucleotide sequence ID" value="NC_010524.1"/>
</dbReference>
<dbReference type="SMR" id="B1XXH3"/>
<dbReference type="STRING" id="395495.Lcho_2828"/>
<dbReference type="KEGG" id="lch:Lcho_2828"/>
<dbReference type="eggNOG" id="COG0238">
    <property type="taxonomic scope" value="Bacteria"/>
</dbReference>
<dbReference type="HOGENOM" id="CLU_148710_0_3_4"/>
<dbReference type="OrthoDB" id="9812008at2"/>
<dbReference type="Proteomes" id="UP000001693">
    <property type="component" value="Chromosome"/>
</dbReference>
<dbReference type="GO" id="GO:0022627">
    <property type="term" value="C:cytosolic small ribosomal subunit"/>
    <property type="evidence" value="ECO:0007669"/>
    <property type="project" value="TreeGrafter"/>
</dbReference>
<dbReference type="GO" id="GO:0070181">
    <property type="term" value="F:small ribosomal subunit rRNA binding"/>
    <property type="evidence" value="ECO:0007669"/>
    <property type="project" value="TreeGrafter"/>
</dbReference>
<dbReference type="GO" id="GO:0003735">
    <property type="term" value="F:structural constituent of ribosome"/>
    <property type="evidence" value="ECO:0007669"/>
    <property type="project" value="InterPro"/>
</dbReference>
<dbReference type="GO" id="GO:0006412">
    <property type="term" value="P:translation"/>
    <property type="evidence" value="ECO:0007669"/>
    <property type="project" value="UniProtKB-UniRule"/>
</dbReference>
<dbReference type="Gene3D" id="4.10.640.10">
    <property type="entry name" value="Ribosomal protein S18"/>
    <property type="match status" value="1"/>
</dbReference>
<dbReference type="HAMAP" id="MF_00270">
    <property type="entry name" value="Ribosomal_bS18"/>
    <property type="match status" value="1"/>
</dbReference>
<dbReference type="InterPro" id="IPR001648">
    <property type="entry name" value="Ribosomal_bS18"/>
</dbReference>
<dbReference type="InterPro" id="IPR018275">
    <property type="entry name" value="Ribosomal_bS18_CS"/>
</dbReference>
<dbReference type="InterPro" id="IPR036870">
    <property type="entry name" value="Ribosomal_bS18_sf"/>
</dbReference>
<dbReference type="NCBIfam" id="TIGR00165">
    <property type="entry name" value="S18"/>
    <property type="match status" value="1"/>
</dbReference>
<dbReference type="PANTHER" id="PTHR13479">
    <property type="entry name" value="30S RIBOSOMAL PROTEIN S18"/>
    <property type="match status" value="1"/>
</dbReference>
<dbReference type="PANTHER" id="PTHR13479:SF40">
    <property type="entry name" value="SMALL RIBOSOMAL SUBUNIT PROTEIN BS18M"/>
    <property type="match status" value="1"/>
</dbReference>
<dbReference type="Pfam" id="PF01084">
    <property type="entry name" value="Ribosomal_S18"/>
    <property type="match status" value="1"/>
</dbReference>
<dbReference type="PRINTS" id="PR00974">
    <property type="entry name" value="RIBOSOMALS18"/>
</dbReference>
<dbReference type="SUPFAM" id="SSF46911">
    <property type="entry name" value="Ribosomal protein S18"/>
    <property type="match status" value="1"/>
</dbReference>
<dbReference type="PROSITE" id="PS00057">
    <property type="entry name" value="RIBOSOMAL_S18"/>
    <property type="match status" value="1"/>
</dbReference>
<proteinExistence type="inferred from homology"/>
<protein>
    <recommendedName>
        <fullName evidence="1">Small ribosomal subunit protein bS18</fullName>
    </recommendedName>
    <alternativeName>
        <fullName evidence="2">30S ribosomal protein S18</fullName>
    </alternativeName>
</protein>
<organism>
    <name type="scientific">Leptothrix cholodnii (strain ATCC 51168 / LMG 8142 / SP-6)</name>
    <name type="common">Leptothrix discophora (strain SP-6)</name>
    <dbReference type="NCBI Taxonomy" id="395495"/>
    <lineage>
        <taxon>Bacteria</taxon>
        <taxon>Pseudomonadati</taxon>
        <taxon>Pseudomonadota</taxon>
        <taxon>Betaproteobacteria</taxon>
        <taxon>Burkholderiales</taxon>
        <taxon>Sphaerotilaceae</taxon>
        <taxon>Leptothrix</taxon>
    </lineage>
</organism>
<reference key="1">
    <citation type="submission" date="2008-03" db="EMBL/GenBank/DDBJ databases">
        <title>Complete sequence of Leptothrix cholodnii SP-6.</title>
        <authorList>
            <consortium name="US DOE Joint Genome Institute"/>
            <person name="Copeland A."/>
            <person name="Lucas S."/>
            <person name="Lapidus A."/>
            <person name="Glavina del Rio T."/>
            <person name="Dalin E."/>
            <person name="Tice H."/>
            <person name="Bruce D."/>
            <person name="Goodwin L."/>
            <person name="Pitluck S."/>
            <person name="Chertkov O."/>
            <person name="Brettin T."/>
            <person name="Detter J.C."/>
            <person name="Han C."/>
            <person name="Kuske C.R."/>
            <person name="Schmutz J."/>
            <person name="Larimer F."/>
            <person name="Land M."/>
            <person name="Hauser L."/>
            <person name="Kyrpides N."/>
            <person name="Lykidis A."/>
            <person name="Emerson D."/>
            <person name="Richardson P."/>
        </authorList>
    </citation>
    <scope>NUCLEOTIDE SEQUENCE [LARGE SCALE GENOMIC DNA]</scope>
    <source>
        <strain>ATCC 51168 / LMG 8142 / SP-6</strain>
    </source>
</reference>
<keyword id="KW-1185">Reference proteome</keyword>
<keyword id="KW-0687">Ribonucleoprotein</keyword>
<keyword id="KW-0689">Ribosomal protein</keyword>
<keyword id="KW-0694">RNA-binding</keyword>
<keyword id="KW-0699">rRNA-binding</keyword>
<accession>B1XXH3</accession>
<comment type="function">
    <text evidence="1">Binds as a heterodimer with protein bS6 to the central domain of the 16S rRNA, where it helps stabilize the platform of the 30S subunit.</text>
</comment>
<comment type="subunit">
    <text evidence="1">Part of the 30S ribosomal subunit. Forms a tight heterodimer with protein bS6.</text>
</comment>
<comment type="similarity">
    <text evidence="1">Belongs to the bacterial ribosomal protein bS18 family.</text>
</comment>
<feature type="chain" id="PRO_1000114430" description="Small ribosomal subunit protein bS18">
    <location>
        <begin position="1"/>
        <end position="94"/>
    </location>
</feature>
<gene>
    <name evidence="1" type="primary">rpsR</name>
    <name type="ordered locus">Lcho_2828</name>
</gene>